<protein>
    <recommendedName>
        <fullName evidence="1">Ribonuclease D</fullName>
        <shortName evidence="1">RNase D</shortName>
        <ecNumber evidence="1">3.1.13.5</ecNumber>
    </recommendedName>
</protein>
<keyword id="KW-0963">Cytoplasm</keyword>
<keyword id="KW-0269">Exonuclease</keyword>
<keyword id="KW-0378">Hydrolase</keyword>
<keyword id="KW-0540">Nuclease</keyword>
<keyword id="KW-1185">Reference proteome</keyword>
<keyword id="KW-0819">tRNA processing</keyword>
<name>RND_HAEIN</name>
<accession>P44442</accession>
<feature type="chain" id="PRO_0000097369" description="Ribonuclease D">
    <location>
        <begin position="1"/>
        <end position="399"/>
    </location>
</feature>
<feature type="domain" description="3'-5' exonuclease" evidence="1">
    <location>
        <begin position="31"/>
        <end position="197"/>
    </location>
</feature>
<feature type="domain" description="HRDC" evidence="1">
    <location>
        <begin position="239"/>
        <end position="318"/>
    </location>
</feature>
<proteinExistence type="inferred from homology"/>
<comment type="function">
    <text evidence="1">Exonuclease involved in the 3' processing of various precursor tRNAs. Initiates hydrolysis at the 3'-terminus of an RNA molecule and releases 5'-mononucleotides.</text>
</comment>
<comment type="catalytic activity">
    <reaction evidence="1">
        <text>Exonucleolytic cleavage that removes extra residues from the 3'-terminus of tRNA to produce 5'-mononucleotides.</text>
        <dbReference type="EC" id="3.1.13.5"/>
    </reaction>
</comment>
<comment type="cofactor">
    <cofactor evidence="1">
        <name>a divalent metal cation</name>
        <dbReference type="ChEBI" id="CHEBI:60240"/>
    </cofactor>
</comment>
<comment type="subcellular location">
    <subcellularLocation>
        <location evidence="1">Cytoplasm</location>
    </subcellularLocation>
</comment>
<comment type="similarity">
    <text evidence="1">Belongs to the RNase D family.</text>
</comment>
<dbReference type="EC" id="3.1.13.5" evidence="1"/>
<dbReference type="EMBL" id="L42023">
    <property type="protein sequence ID" value="AAC22048.1"/>
    <property type="molecule type" value="Genomic_DNA"/>
</dbReference>
<dbReference type="PIR" id="B64065">
    <property type="entry name" value="B64065"/>
</dbReference>
<dbReference type="RefSeq" id="NP_438552.1">
    <property type="nucleotide sequence ID" value="NC_000907.1"/>
</dbReference>
<dbReference type="SMR" id="P44442"/>
<dbReference type="STRING" id="71421.HI_0390"/>
<dbReference type="EnsemblBacteria" id="AAC22048">
    <property type="protein sequence ID" value="AAC22048"/>
    <property type="gene ID" value="HI_0390"/>
</dbReference>
<dbReference type="KEGG" id="hin:HI_0390"/>
<dbReference type="PATRIC" id="fig|71421.8.peg.409"/>
<dbReference type="eggNOG" id="COG0349">
    <property type="taxonomic scope" value="Bacteria"/>
</dbReference>
<dbReference type="HOGENOM" id="CLU_042387_0_0_6"/>
<dbReference type="OrthoDB" id="9800549at2"/>
<dbReference type="PhylomeDB" id="P44442"/>
<dbReference type="BioCyc" id="HINF71421:G1GJ1-406-MONOMER"/>
<dbReference type="Proteomes" id="UP000000579">
    <property type="component" value="Chromosome"/>
</dbReference>
<dbReference type="GO" id="GO:0005737">
    <property type="term" value="C:cytoplasm"/>
    <property type="evidence" value="ECO:0007669"/>
    <property type="project" value="UniProtKB-SubCell"/>
</dbReference>
<dbReference type="GO" id="GO:0000175">
    <property type="term" value="F:3'-5'-RNA exonuclease activity"/>
    <property type="evidence" value="ECO:0000318"/>
    <property type="project" value="GO_Central"/>
</dbReference>
<dbReference type="GO" id="GO:0003676">
    <property type="term" value="F:nucleic acid binding"/>
    <property type="evidence" value="ECO:0007669"/>
    <property type="project" value="InterPro"/>
</dbReference>
<dbReference type="GO" id="GO:0000166">
    <property type="term" value="F:nucleotide binding"/>
    <property type="evidence" value="ECO:0007669"/>
    <property type="project" value="InterPro"/>
</dbReference>
<dbReference type="GO" id="GO:0033890">
    <property type="term" value="F:ribonuclease D activity"/>
    <property type="evidence" value="ECO:0000318"/>
    <property type="project" value="GO_Central"/>
</dbReference>
<dbReference type="GO" id="GO:0042780">
    <property type="term" value="P:tRNA 3'-end processing"/>
    <property type="evidence" value="ECO:0000318"/>
    <property type="project" value="GO_Central"/>
</dbReference>
<dbReference type="CDD" id="cd06142">
    <property type="entry name" value="RNaseD_exo"/>
    <property type="match status" value="1"/>
</dbReference>
<dbReference type="Gene3D" id="1.10.150.80">
    <property type="entry name" value="HRDC domain"/>
    <property type="match status" value="2"/>
</dbReference>
<dbReference type="Gene3D" id="3.30.420.10">
    <property type="entry name" value="Ribonuclease H-like superfamily/Ribonuclease H"/>
    <property type="match status" value="1"/>
</dbReference>
<dbReference type="HAMAP" id="MF_01899">
    <property type="entry name" value="RNase_D"/>
    <property type="match status" value="1"/>
</dbReference>
<dbReference type="InterPro" id="IPR002562">
    <property type="entry name" value="3'-5'_exonuclease_dom"/>
</dbReference>
<dbReference type="InterPro" id="IPR010997">
    <property type="entry name" value="HRDC-like_sf"/>
</dbReference>
<dbReference type="InterPro" id="IPR002121">
    <property type="entry name" value="HRDC_dom"/>
</dbReference>
<dbReference type="InterPro" id="IPR044876">
    <property type="entry name" value="HRDC_dom_sf"/>
</dbReference>
<dbReference type="InterPro" id="IPR006292">
    <property type="entry name" value="RNase_D"/>
</dbReference>
<dbReference type="InterPro" id="IPR051086">
    <property type="entry name" value="RNase_D-like"/>
</dbReference>
<dbReference type="InterPro" id="IPR048579">
    <property type="entry name" value="RNAseD_HRDC_C"/>
</dbReference>
<dbReference type="InterPro" id="IPR012337">
    <property type="entry name" value="RNaseH-like_sf"/>
</dbReference>
<dbReference type="InterPro" id="IPR036397">
    <property type="entry name" value="RNaseH_sf"/>
</dbReference>
<dbReference type="NCBIfam" id="TIGR01388">
    <property type="entry name" value="rnd"/>
    <property type="match status" value="1"/>
</dbReference>
<dbReference type="PANTHER" id="PTHR47649">
    <property type="entry name" value="RIBONUCLEASE D"/>
    <property type="match status" value="1"/>
</dbReference>
<dbReference type="PANTHER" id="PTHR47649:SF1">
    <property type="entry name" value="RIBONUCLEASE D"/>
    <property type="match status" value="1"/>
</dbReference>
<dbReference type="Pfam" id="PF01612">
    <property type="entry name" value="DNA_pol_A_exo1"/>
    <property type="match status" value="1"/>
</dbReference>
<dbReference type="Pfam" id="PF00570">
    <property type="entry name" value="HRDC"/>
    <property type="match status" value="1"/>
</dbReference>
<dbReference type="Pfam" id="PF21293">
    <property type="entry name" value="RNAseD_HRDC_C"/>
    <property type="match status" value="1"/>
</dbReference>
<dbReference type="SMART" id="SM00474">
    <property type="entry name" value="35EXOc"/>
    <property type="match status" value="1"/>
</dbReference>
<dbReference type="SMART" id="SM00341">
    <property type="entry name" value="HRDC"/>
    <property type="match status" value="1"/>
</dbReference>
<dbReference type="SUPFAM" id="SSF47819">
    <property type="entry name" value="HRDC-like"/>
    <property type="match status" value="2"/>
</dbReference>
<dbReference type="SUPFAM" id="SSF53098">
    <property type="entry name" value="Ribonuclease H-like"/>
    <property type="match status" value="1"/>
</dbReference>
<dbReference type="PROSITE" id="PS50967">
    <property type="entry name" value="HRDC"/>
    <property type="match status" value="1"/>
</dbReference>
<evidence type="ECO:0000255" key="1">
    <source>
        <dbReference type="HAMAP-Rule" id="MF_01899"/>
    </source>
</evidence>
<sequence>MSKWDSNIPFLFFSNKKITMIKECQNPPHFRVVTDNTALLEVCNLAQQKSAVALDTEFMRVSTYFPKLGLIQLYDGEHVSLIDPLAITDFSPFVALLANPKVLKILHSCSEDLLVFLQEFDQLPRPMIDTQIMARFLGLGTSAGLAKLAQQYLNVEIDKGATRTNWIKRPLSDIQLQYAAGDVWYLLPLYHILEKELAKTPWEQAVRDDCELVLAKTHKLQERDSEKAYLDIPNAWKLNPLELSRLRVLAQWRQNVAIERDLALSYIVKSEHLWKVAKNNPRNTSEMLEMGLTENEVRVRGKEILQLLSQARRISSNDYPKSIERISEDPRYKKTIRLLQEKVNSLTPEGLTPEIVASKRTLEELIKWVWKYDCSQDKRPELLIGWRKPIGEKLVDALK</sequence>
<organism>
    <name type="scientific">Haemophilus influenzae (strain ATCC 51907 / DSM 11121 / KW20 / Rd)</name>
    <dbReference type="NCBI Taxonomy" id="71421"/>
    <lineage>
        <taxon>Bacteria</taxon>
        <taxon>Pseudomonadati</taxon>
        <taxon>Pseudomonadota</taxon>
        <taxon>Gammaproteobacteria</taxon>
        <taxon>Pasteurellales</taxon>
        <taxon>Pasteurellaceae</taxon>
        <taxon>Haemophilus</taxon>
    </lineage>
</organism>
<gene>
    <name evidence="1" type="primary">rnd</name>
    <name type="ordered locus">HI_0390</name>
</gene>
<reference key="1">
    <citation type="journal article" date="1995" name="Science">
        <title>Whole-genome random sequencing and assembly of Haemophilus influenzae Rd.</title>
        <authorList>
            <person name="Fleischmann R.D."/>
            <person name="Adams M.D."/>
            <person name="White O."/>
            <person name="Clayton R.A."/>
            <person name="Kirkness E.F."/>
            <person name="Kerlavage A.R."/>
            <person name="Bult C.J."/>
            <person name="Tomb J.-F."/>
            <person name="Dougherty B.A."/>
            <person name="Merrick J.M."/>
            <person name="McKenney K."/>
            <person name="Sutton G.G."/>
            <person name="FitzHugh W."/>
            <person name="Fields C.A."/>
            <person name="Gocayne J.D."/>
            <person name="Scott J.D."/>
            <person name="Shirley R."/>
            <person name="Liu L.-I."/>
            <person name="Glodek A."/>
            <person name="Kelley J.M."/>
            <person name="Weidman J.F."/>
            <person name="Phillips C.A."/>
            <person name="Spriggs T."/>
            <person name="Hedblom E."/>
            <person name="Cotton M.D."/>
            <person name="Utterback T.R."/>
            <person name="Hanna M.C."/>
            <person name="Nguyen D.T."/>
            <person name="Saudek D.M."/>
            <person name="Brandon R.C."/>
            <person name="Fine L.D."/>
            <person name="Fritchman J.L."/>
            <person name="Fuhrmann J.L."/>
            <person name="Geoghagen N.S.M."/>
            <person name="Gnehm C.L."/>
            <person name="McDonald L.A."/>
            <person name="Small K.V."/>
            <person name="Fraser C.M."/>
            <person name="Smith H.O."/>
            <person name="Venter J.C."/>
        </authorList>
    </citation>
    <scope>NUCLEOTIDE SEQUENCE [LARGE SCALE GENOMIC DNA]</scope>
    <source>
        <strain>ATCC 51907 / DSM 11121 / KW20 / Rd</strain>
    </source>
</reference>